<sequence>MGNSNTKESRAGDGSSRAHHGDPGSASLQSDRVSSRRNRVSRGDLGGILGLGTGASQSEPPYERRETKQEREARRLERERVARIAERERSMKEEHVDGGYLVTMGTYTSPEDFNKPIVRQLQIERKVAPFWRGLNDFDDQWTEPQIIAAARGLPVPPADQIPPEDLIPRPLPANPRTEGSSNLDNLTIPITGRSPSTASEHASSNPGSALPSPVSAQAPRANSPFKPRGKAIAAVLGGGGSRNGSTTELMPREINLPHDPFVNGQPLEVFLYKNATECPICFLTFPPYLNHTRCCDQPICSECFVQIKRPDPHFPEGHNENDPNHNPEETAGLLVSEPACCPYCTQPDFGVTYEPPPFRRGLSYSISLTAVGAASAAMSSSSSVNSASLSPTNASPSNGTGRRRNQSVSASSPSVILTDRIRPEWATKLQAARAHLARRAAAATALHTAAFIVGGSENRAFRSRFGRRNNGGSGSALPSPGGVNHGEGENGDSGSGTPSQNDMDQNSRGDPGRGRSGGNHRDRLEDLEEMMLAEAVRLSLAAEEERKRKVSKEERKEAKKREKEERKAAKAAAKQVGPYEGASGRSGHSSASGSTLSLPGFGFGRKRGNSAASNLRIEASVASAIATTESPEANPKEKGKGVDRAVSTHAEGAPATATDPAVLGGSASTSSPRPVPHLPAGPSHLRQMSNASSVTSSILDSRHGSYTSPTHLQDPRSSGLSLGSRSGASEDGGDADRDRDPCASTEPMFNFRSLAQVVGVSLDGENAGRRLSLIEAERRARESGETGSQDSADFGEVETIKTDTATDHADVKPQAEASGSLSVDTAMGRHIKGSPIAQNGSGEVESDSLSPPTVTITLETPATASANDELKQLGSEAAVEPVHRLTE</sequence>
<keyword id="KW-0963">Cytoplasm</keyword>
<keyword id="KW-1185">Reference proteome</keyword>
<organism>
    <name type="scientific">Chaetomium globosum (strain ATCC 6205 / CBS 148.51 / DSM 1962 / NBRC 6347 / NRRL 1970)</name>
    <name type="common">Soil fungus</name>
    <dbReference type="NCBI Taxonomy" id="306901"/>
    <lineage>
        <taxon>Eukaryota</taxon>
        <taxon>Fungi</taxon>
        <taxon>Dikarya</taxon>
        <taxon>Ascomycota</taxon>
        <taxon>Pezizomycotina</taxon>
        <taxon>Sordariomycetes</taxon>
        <taxon>Sordariomycetidae</taxon>
        <taxon>Sordariales</taxon>
        <taxon>Chaetomiaceae</taxon>
        <taxon>Chaetomium</taxon>
    </lineage>
</organism>
<comment type="function">
    <text evidence="1">May negatively regulate the SNF1 kinase.</text>
</comment>
<comment type="subcellular location">
    <subcellularLocation>
        <location evidence="1">Cytoplasm</location>
    </subcellularLocation>
</comment>
<comment type="similarity">
    <text evidence="3">Belongs to the SIP5 family.</text>
</comment>
<name>SIP5_CHAGB</name>
<accession>Q2GTG9</accession>
<proteinExistence type="inferred from homology"/>
<dbReference type="EMBL" id="CH408034">
    <property type="protein sequence ID" value="EAQ84721.1"/>
    <property type="molecule type" value="Genomic_DNA"/>
</dbReference>
<dbReference type="RefSeq" id="XP_001226662.1">
    <property type="nucleotide sequence ID" value="XM_001226661.1"/>
</dbReference>
<dbReference type="SMR" id="Q2GTG9"/>
<dbReference type="FunCoup" id="Q2GTG9">
    <property type="interactions" value="33"/>
</dbReference>
<dbReference type="STRING" id="306901.Q2GTG9"/>
<dbReference type="GeneID" id="4395023"/>
<dbReference type="VEuPathDB" id="FungiDB:CHGG_08735"/>
<dbReference type="eggNOG" id="KOG2789">
    <property type="taxonomic scope" value="Eukaryota"/>
</dbReference>
<dbReference type="HOGENOM" id="CLU_009068_1_0_1"/>
<dbReference type="InParanoid" id="Q2GTG9"/>
<dbReference type="OMA" id="CFLTYPP"/>
<dbReference type="OrthoDB" id="21471at2759"/>
<dbReference type="Proteomes" id="UP000001056">
    <property type="component" value="Unassembled WGS sequence"/>
</dbReference>
<dbReference type="GO" id="GO:0005737">
    <property type="term" value="C:cytoplasm"/>
    <property type="evidence" value="ECO:0007669"/>
    <property type="project" value="UniProtKB-SubCell"/>
</dbReference>
<dbReference type="CDD" id="cd24139">
    <property type="entry name" value="SIP5-like"/>
    <property type="match status" value="1"/>
</dbReference>
<dbReference type="InterPro" id="IPR039301">
    <property type="entry name" value="Sip5/DA2"/>
</dbReference>
<dbReference type="PANTHER" id="PTHR31315">
    <property type="entry name" value="PROTEIN SIP5"/>
    <property type="match status" value="1"/>
</dbReference>
<dbReference type="PANTHER" id="PTHR31315:SF1">
    <property type="entry name" value="PROTEIN SIP5"/>
    <property type="match status" value="1"/>
</dbReference>
<evidence type="ECO:0000250" key="1"/>
<evidence type="ECO:0000256" key="2">
    <source>
        <dbReference type="SAM" id="MobiDB-lite"/>
    </source>
</evidence>
<evidence type="ECO:0000305" key="3"/>
<feature type="chain" id="PRO_0000333434" description="Protein SIP5">
    <location>
        <begin position="1"/>
        <end position="887"/>
    </location>
</feature>
<feature type="region of interest" description="Disordered" evidence="2">
    <location>
        <begin position="1"/>
        <end position="77"/>
    </location>
</feature>
<feature type="region of interest" description="Disordered" evidence="2">
    <location>
        <begin position="168"/>
        <end position="226"/>
    </location>
</feature>
<feature type="region of interest" description="Disordered" evidence="2">
    <location>
        <begin position="381"/>
        <end position="415"/>
    </location>
</feature>
<feature type="region of interest" description="Disordered" evidence="2">
    <location>
        <begin position="463"/>
        <end position="521"/>
    </location>
</feature>
<feature type="region of interest" description="Disordered" evidence="2">
    <location>
        <begin position="542"/>
        <end position="608"/>
    </location>
</feature>
<feature type="region of interest" description="Disordered" evidence="2">
    <location>
        <begin position="623"/>
        <end position="746"/>
    </location>
</feature>
<feature type="region of interest" description="Disordered" evidence="2">
    <location>
        <begin position="778"/>
        <end position="854"/>
    </location>
</feature>
<feature type="compositionally biased region" description="Gly residues" evidence="2">
    <location>
        <begin position="44"/>
        <end position="53"/>
    </location>
</feature>
<feature type="compositionally biased region" description="Basic and acidic residues" evidence="2">
    <location>
        <begin position="61"/>
        <end position="77"/>
    </location>
</feature>
<feature type="compositionally biased region" description="Polar residues" evidence="2">
    <location>
        <begin position="193"/>
        <end position="207"/>
    </location>
</feature>
<feature type="compositionally biased region" description="Low complexity" evidence="2">
    <location>
        <begin position="381"/>
        <end position="390"/>
    </location>
</feature>
<feature type="compositionally biased region" description="Polar residues" evidence="2">
    <location>
        <begin position="391"/>
        <end position="415"/>
    </location>
</feature>
<feature type="compositionally biased region" description="Polar residues" evidence="2">
    <location>
        <begin position="495"/>
        <end position="504"/>
    </location>
</feature>
<feature type="compositionally biased region" description="Basic and acidic residues" evidence="2">
    <location>
        <begin position="505"/>
        <end position="521"/>
    </location>
</feature>
<feature type="compositionally biased region" description="Basic and acidic residues" evidence="2">
    <location>
        <begin position="543"/>
        <end position="568"/>
    </location>
</feature>
<feature type="compositionally biased region" description="Low complexity" evidence="2">
    <location>
        <begin position="581"/>
        <end position="600"/>
    </location>
</feature>
<feature type="compositionally biased region" description="Basic and acidic residues" evidence="2">
    <location>
        <begin position="634"/>
        <end position="643"/>
    </location>
</feature>
<feature type="compositionally biased region" description="Polar residues" evidence="2">
    <location>
        <begin position="686"/>
        <end position="711"/>
    </location>
</feature>
<feature type="compositionally biased region" description="Low complexity" evidence="2">
    <location>
        <begin position="716"/>
        <end position="727"/>
    </location>
</feature>
<feature type="compositionally biased region" description="Basic and acidic residues" evidence="2">
    <location>
        <begin position="798"/>
        <end position="813"/>
    </location>
</feature>
<feature type="compositionally biased region" description="Polar residues" evidence="2">
    <location>
        <begin position="836"/>
        <end position="854"/>
    </location>
</feature>
<reference key="1">
    <citation type="journal article" date="2015" name="Genome Announc.">
        <title>Draft genome sequence of the cellulolytic fungus Chaetomium globosum.</title>
        <authorList>
            <person name="Cuomo C.A."/>
            <person name="Untereiner W.A."/>
            <person name="Ma L.-J."/>
            <person name="Grabherr M."/>
            <person name="Birren B.W."/>
        </authorList>
    </citation>
    <scope>NUCLEOTIDE SEQUENCE [LARGE SCALE GENOMIC DNA]</scope>
    <source>
        <strain>ATCC 6205 / CBS 148.51 / DSM 1962 / NBRC 6347 / NRRL 1970</strain>
    </source>
</reference>
<protein>
    <recommendedName>
        <fullName>Protein SIP5</fullName>
    </recommendedName>
</protein>
<gene>
    <name type="primary">SIP5</name>
    <name type="ORF">CHGG_08735</name>
</gene>